<sequence length="521" mass="55645">MIKQALISVSDKTGIVDFAKSLSDLGVKLLSTGGTAKLLADAGLPVTEVADYTGFPEMLDGRVKTLHPKVHGGILARRDLPEHMQALEQHGIPTIDLLVVNLYPFVATIAKDDCTLADAIENIDIGGPTMLRSAAKNHRDVTVVVDPADYAVVLDEMKANGNTVGYPTNFRLATKVFAHTAQYDGAITNYLTSLTDELKHASRSAYPATLNLAFDKVQDLRYGENPHQSAAFYRDLAAPAGALANYRQLQGKELSYNNIADSDAAWECVKTFDAPACVIIKHANPCGVAVGNDSADAYAKAFQTDPTSAFGGIIAFNREVDEAAAQAVAKQFVEVLIAPSFSDAAKQVFAAKQNVRLLEIALGDGHNAFDLKRVGGGLLVQSLDSKNVQPHELRVVTKRHPTPKEMDDLLFAWRVAKYVKSNAIVFCGNGMTLGVGAGQMSRVDSARIASIKAQNAGLTLTGSAVASDAFFPFRDGLDVVVAAGATCVIQPGGSMRDDEVIAAADEHNIAMILTGVRHFRH</sequence>
<evidence type="ECO:0000255" key="1">
    <source>
        <dbReference type="HAMAP-Rule" id="MF_00139"/>
    </source>
</evidence>
<evidence type="ECO:0000255" key="2">
    <source>
        <dbReference type="PROSITE-ProRule" id="PRU01202"/>
    </source>
</evidence>
<protein>
    <recommendedName>
        <fullName evidence="1">Bifunctional purine biosynthesis protein PurH</fullName>
    </recommendedName>
    <domain>
        <recommendedName>
            <fullName evidence="1">Phosphoribosylaminoimidazolecarboxamide formyltransferase</fullName>
            <ecNumber evidence="1">2.1.2.3</ecNumber>
        </recommendedName>
        <alternativeName>
            <fullName evidence="1">AICAR transformylase</fullName>
        </alternativeName>
    </domain>
    <domain>
        <recommendedName>
            <fullName evidence="1">IMP cyclohydrolase</fullName>
            <ecNumber evidence="1">3.5.4.10</ecNumber>
        </recommendedName>
        <alternativeName>
            <fullName evidence="1">ATIC</fullName>
        </alternativeName>
        <alternativeName>
            <fullName evidence="1">IMP synthase</fullName>
        </alternativeName>
        <alternativeName>
            <fullName evidence="1">Inosinicase</fullName>
        </alternativeName>
    </domain>
</protein>
<gene>
    <name evidence="1" type="primary">purH</name>
    <name type="ordered locus">BceJ2315_32750</name>
    <name type="ORF">BCAL3336</name>
</gene>
<comment type="catalytic activity">
    <reaction evidence="1">
        <text>(6R)-10-formyltetrahydrofolate + 5-amino-1-(5-phospho-beta-D-ribosyl)imidazole-4-carboxamide = 5-formamido-1-(5-phospho-D-ribosyl)imidazole-4-carboxamide + (6S)-5,6,7,8-tetrahydrofolate</text>
        <dbReference type="Rhea" id="RHEA:22192"/>
        <dbReference type="ChEBI" id="CHEBI:57453"/>
        <dbReference type="ChEBI" id="CHEBI:58467"/>
        <dbReference type="ChEBI" id="CHEBI:58475"/>
        <dbReference type="ChEBI" id="CHEBI:195366"/>
        <dbReference type="EC" id="2.1.2.3"/>
    </reaction>
</comment>
<comment type="catalytic activity">
    <reaction evidence="1">
        <text>IMP + H2O = 5-formamido-1-(5-phospho-D-ribosyl)imidazole-4-carboxamide</text>
        <dbReference type="Rhea" id="RHEA:18445"/>
        <dbReference type="ChEBI" id="CHEBI:15377"/>
        <dbReference type="ChEBI" id="CHEBI:58053"/>
        <dbReference type="ChEBI" id="CHEBI:58467"/>
        <dbReference type="EC" id="3.5.4.10"/>
    </reaction>
</comment>
<comment type="pathway">
    <text evidence="1">Purine metabolism; IMP biosynthesis via de novo pathway; 5-formamido-1-(5-phospho-D-ribosyl)imidazole-4-carboxamide from 5-amino-1-(5-phospho-D-ribosyl)imidazole-4-carboxamide (10-formyl THF route): step 1/1.</text>
</comment>
<comment type="pathway">
    <text evidence="1">Purine metabolism; IMP biosynthesis via de novo pathway; IMP from 5-formamido-1-(5-phospho-D-ribosyl)imidazole-4-carboxamide: step 1/1.</text>
</comment>
<comment type="domain">
    <text evidence="1">The IMP cyclohydrolase activity resides in the N-terminal region.</text>
</comment>
<comment type="similarity">
    <text evidence="1">Belongs to the PurH family.</text>
</comment>
<name>PUR9_BURCJ</name>
<organism>
    <name type="scientific">Burkholderia cenocepacia (strain ATCC BAA-245 / DSM 16553 / LMG 16656 / NCTC 13227 / J2315 / CF5610)</name>
    <name type="common">Burkholderia cepacia (strain J2315)</name>
    <dbReference type="NCBI Taxonomy" id="216591"/>
    <lineage>
        <taxon>Bacteria</taxon>
        <taxon>Pseudomonadati</taxon>
        <taxon>Pseudomonadota</taxon>
        <taxon>Betaproteobacteria</taxon>
        <taxon>Burkholderiales</taxon>
        <taxon>Burkholderiaceae</taxon>
        <taxon>Burkholderia</taxon>
        <taxon>Burkholderia cepacia complex</taxon>
    </lineage>
</organism>
<accession>B4EES4</accession>
<keyword id="KW-0378">Hydrolase</keyword>
<keyword id="KW-0511">Multifunctional enzyme</keyword>
<keyword id="KW-0658">Purine biosynthesis</keyword>
<keyword id="KW-0808">Transferase</keyword>
<dbReference type="EC" id="2.1.2.3" evidence="1"/>
<dbReference type="EC" id="3.5.4.10" evidence="1"/>
<dbReference type="EMBL" id="AM747720">
    <property type="protein sequence ID" value="CAR53659.1"/>
    <property type="molecule type" value="Genomic_DNA"/>
</dbReference>
<dbReference type="RefSeq" id="WP_006483450.1">
    <property type="nucleotide sequence ID" value="NC_011000.1"/>
</dbReference>
<dbReference type="SMR" id="B4EES4"/>
<dbReference type="GeneID" id="56557127"/>
<dbReference type="KEGG" id="bcj:BCAL3336"/>
<dbReference type="eggNOG" id="COG0138">
    <property type="taxonomic scope" value="Bacteria"/>
</dbReference>
<dbReference type="HOGENOM" id="CLU_016316_5_2_4"/>
<dbReference type="BioCyc" id="BCEN216591:G1G1V-3712-MONOMER"/>
<dbReference type="UniPathway" id="UPA00074">
    <property type="reaction ID" value="UER00133"/>
</dbReference>
<dbReference type="UniPathway" id="UPA00074">
    <property type="reaction ID" value="UER00135"/>
</dbReference>
<dbReference type="Proteomes" id="UP000001035">
    <property type="component" value="Chromosome 1"/>
</dbReference>
<dbReference type="GO" id="GO:0005829">
    <property type="term" value="C:cytosol"/>
    <property type="evidence" value="ECO:0007669"/>
    <property type="project" value="TreeGrafter"/>
</dbReference>
<dbReference type="GO" id="GO:0003937">
    <property type="term" value="F:IMP cyclohydrolase activity"/>
    <property type="evidence" value="ECO:0007669"/>
    <property type="project" value="UniProtKB-UniRule"/>
</dbReference>
<dbReference type="GO" id="GO:0004643">
    <property type="term" value="F:phosphoribosylaminoimidazolecarboxamide formyltransferase activity"/>
    <property type="evidence" value="ECO:0007669"/>
    <property type="project" value="UniProtKB-UniRule"/>
</dbReference>
<dbReference type="GO" id="GO:0006189">
    <property type="term" value="P:'de novo' IMP biosynthetic process"/>
    <property type="evidence" value="ECO:0007669"/>
    <property type="project" value="UniProtKB-UniRule"/>
</dbReference>
<dbReference type="CDD" id="cd01421">
    <property type="entry name" value="IMPCH"/>
    <property type="match status" value="1"/>
</dbReference>
<dbReference type="FunFam" id="3.40.140.20:FF:000001">
    <property type="entry name" value="Bifunctional purine biosynthesis protein PurH"/>
    <property type="match status" value="1"/>
</dbReference>
<dbReference type="FunFam" id="3.40.140.20:FF:000002">
    <property type="entry name" value="Bifunctional purine biosynthesis protein PurH"/>
    <property type="match status" value="1"/>
</dbReference>
<dbReference type="FunFam" id="3.40.50.1380:FF:000001">
    <property type="entry name" value="Bifunctional purine biosynthesis protein PurH"/>
    <property type="match status" value="1"/>
</dbReference>
<dbReference type="Gene3D" id="3.40.140.20">
    <property type="match status" value="2"/>
</dbReference>
<dbReference type="Gene3D" id="3.40.50.1380">
    <property type="entry name" value="Methylglyoxal synthase-like domain"/>
    <property type="match status" value="1"/>
</dbReference>
<dbReference type="HAMAP" id="MF_00139">
    <property type="entry name" value="PurH"/>
    <property type="match status" value="1"/>
</dbReference>
<dbReference type="InterPro" id="IPR024051">
    <property type="entry name" value="AICAR_Tfase_dup_dom_sf"/>
</dbReference>
<dbReference type="InterPro" id="IPR016193">
    <property type="entry name" value="Cytidine_deaminase-like"/>
</dbReference>
<dbReference type="InterPro" id="IPR011607">
    <property type="entry name" value="MGS-like_dom"/>
</dbReference>
<dbReference type="InterPro" id="IPR036914">
    <property type="entry name" value="MGS-like_dom_sf"/>
</dbReference>
<dbReference type="InterPro" id="IPR002695">
    <property type="entry name" value="PurH-like"/>
</dbReference>
<dbReference type="NCBIfam" id="NF002049">
    <property type="entry name" value="PRK00881.1"/>
    <property type="match status" value="1"/>
</dbReference>
<dbReference type="NCBIfam" id="TIGR00355">
    <property type="entry name" value="purH"/>
    <property type="match status" value="1"/>
</dbReference>
<dbReference type="PANTHER" id="PTHR11692:SF0">
    <property type="entry name" value="BIFUNCTIONAL PURINE BIOSYNTHESIS PROTEIN ATIC"/>
    <property type="match status" value="1"/>
</dbReference>
<dbReference type="PANTHER" id="PTHR11692">
    <property type="entry name" value="BIFUNCTIONAL PURINE BIOSYNTHESIS PROTEIN PURH"/>
    <property type="match status" value="1"/>
</dbReference>
<dbReference type="Pfam" id="PF01808">
    <property type="entry name" value="AICARFT_IMPCHas"/>
    <property type="match status" value="1"/>
</dbReference>
<dbReference type="Pfam" id="PF02142">
    <property type="entry name" value="MGS"/>
    <property type="match status" value="1"/>
</dbReference>
<dbReference type="PIRSF" id="PIRSF000414">
    <property type="entry name" value="AICARFT_IMPCHas"/>
    <property type="match status" value="1"/>
</dbReference>
<dbReference type="SMART" id="SM00798">
    <property type="entry name" value="AICARFT_IMPCHas"/>
    <property type="match status" value="1"/>
</dbReference>
<dbReference type="SMART" id="SM00851">
    <property type="entry name" value="MGS"/>
    <property type="match status" value="1"/>
</dbReference>
<dbReference type="SUPFAM" id="SSF53927">
    <property type="entry name" value="Cytidine deaminase-like"/>
    <property type="match status" value="1"/>
</dbReference>
<dbReference type="SUPFAM" id="SSF52335">
    <property type="entry name" value="Methylglyoxal synthase-like"/>
    <property type="match status" value="1"/>
</dbReference>
<dbReference type="PROSITE" id="PS51855">
    <property type="entry name" value="MGS"/>
    <property type="match status" value="1"/>
</dbReference>
<feature type="chain" id="PRO_1000096045" description="Bifunctional purine biosynthesis protein PurH">
    <location>
        <begin position="1"/>
        <end position="521"/>
    </location>
</feature>
<feature type="domain" description="MGS-like" evidence="2">
    <location>
        <begin position="1"/>
        <end position="145"/>
    </location>
</feature>
<reference key="1">
    <citation type="journal article" date="2009" name="J. Bacteriol.">
        <title>The genome of Burkholderia cenocepacia J2315, an epidemic pathogen of cystic fibrosis patients.</title>
        <authorList>
            <person name="Holden M.T."/>
            <person name="Seth-Smith H.M."/>
            <person name="Crossman L.C."/>
            <person name="Sebaihia M."/>
            <person name="Bentley S.D."/>
            <person name="Cerdeno-Tarraga A.M."/>
            <person name="Thomson N.R."/>
            <person name="Bason N."/>
            <person name="Quail M.A."/>
            <person name="Sharp S."/>
            <person name="Cherevach I."/>
            <person name="Churcher C."/>
            <person name="Goodhead I."/>
            <person name="Hauser H."/>
            <person name="Holroyd N."/>
            <person name="Mungall K."/>
            <person name="Scott P."/>
            <person name="Walker D."/>
            <person name="White B."/>
            <person name="Rose H."/>
            <person name="Iversen P."/>
            <person name="Mil-Homens D."/>
            <person name="Rocha E.P."/>
            <person name="Fialho A.M."/>
            <person name="Baldwin A."/>
            <person name="Dowson C."/>
            <person name="Barrell B.G."/>
            <person name="Govan J.R."/>
            <person name="Vandamme P."/>
            <person name="Hart C.A."/>
            <person name="Mahenthiralingam E."/>
            <person name="Parkhill J."/>
        </authorList>
    </citation>
    <scope>NUCLEOTIDE SEQUENCE [LARGE SCALE GENOMIC DNA]</scope>
    <source>
        <strain>ATCC BAA-245 / DSM 16553 / LMG 16656 / NCTC 13227 / J2315 / CF5610</strain>
    </source>
</reference>
<proteinExistence type="inferred from homology"/>